<evidence type="ECO:0000250" key="1"/>
<evidence type="ECO:0000250" key="2">
    <source>
        <dbReference type="UniProtKB" id="P37329"/>
    </source>
</evidence>
<evidence type="ECO:0000269" key="3">
    <source>
    </source>
</evidence>
<evidence type="ECO:0000305" key="4"/>
<gene>
    <name type="primary">modA</name>
    <name type="ordered locus">HI_1693</name>
</gene>
<name>MODA_HAEIN</name>
<organism>
    <name type="scientific">Haemophilus influenzae (strain ATCC 51907 / DSM 11121 / KW20 / Rd)</name>
    <dbReference type="NCBI Taxonomy" id="71421"/>
    <lineage>
        <taxon>Bacteria</taxon>
        <taxon>Pseudomonadati</taxon>
        <taxon>Pseudomonadota</taxon>
        <taxon>Gammaproteobacteria</taxon>
        <taxon>Pasteurellales</taxon>
        <taxon>Pasteurellaceae</taxon>
        <taxon>Haemophilus</taxon>
    </lineage>
</organism>
<protein>
    <recommendedName>
        <fullName evidence="4">Molybdate-binding protein ModA</fullName>
    </recommendedName>
    <alternativeName>
        <fullName evidence="4">Molybdate/tungstate-binding protein ModA</fullName>
    </alternativeName>
</protein>
<dbReference type="EMBL" id="L42023">
    <property type="protein sequence ID" value="AAC23339.1"/>
    <property type="molecule type" value="Genomic_DNA"/>
</dbReference>
<dbReference type="EMBL" id="M94855">
    <property type="protein sequence ID" value="AAA24985.1"/>
    <property type="molecule type" value="Genomic_DNA"/>
</dbReference>
<dbReference type="PIR" id="A64175">
    <property type="entry name" value="A64175"/>
</dbReference>
<dbReference type="PIR" id="S27583">
    <property type="entry name" value="S27583"/>
</dbReference>
<dbReference type="RefSeq" id="NP_439835.1">
    <property type="nucleotide sequence ID" value="NC_000907.1"/>
</dbReference>
<dbReference type="SMR" id="P45323"/>
<dbReference type="STRING" id="71421.HI_1693"/>
<dbReference type="EnsemblBacteria" id="AAC23339">
    <property type="protein sequence ID" value="AAC23339"/>
    <property type="gene ID" value="HI_1693"/>
</dbReference>
<dbReference type="KEGG" id="hin:HI_1693"/>
<dbReference type="PATRIC" id="fig|71421.8.peg.1772"/>
<dbReference type="eggNOG" id="COG0725">
    <property type="taxonomic scope" value="Bacteria"/>
</dbReference>
<dbReference type="HOGENOM" id="CLU_065520_3_0_6"/>
<dbReference type="OrthoDB" id="9785015at2"/>
<dbReference type="PhylomeDB" id="P45323"/>
<dbReference type="BioCyc" id="HINF71421:G1GJ1-1709-MONOMER"/>
<dbReference type="PHI-base" id="PHI:5422"/>
<dbReference type="Proteomes" id="UP000000579">
    <property type="component" value="Chromosome"/>
</dbReference>
<dbReference type="GO" id="GO:0030288">
    <property type="term" value="C:outer membrane-bounded periplasmic space"/>
    <property type="evidence" value="ECO:0000318"/>
    <property type="project" value="GO_Central"/>
</dbReference>
<dbReference type="GO" id="GO:0046872">
    <property type="term" value="F:metal ion binding"/>
    <property type="evidence" value="ECO:0007669"/>
    <property type="project" value="UniProtKB-KW"/>
</dbReference>
<dbReference type="GO" id="GO:0030973">
    <property type="term" value="F:molybdate ion binding"/>
    <property type="evidence" value="ECO:0000250"/>
    <property type="project" value="UniProtKB"/>
</dbReference>
<dbReference type="GO" id="GO:0015689">
    <property type="term" value="P:molybdate ion transport"/>
    <property type="evidence" value="ECO:0000318"/>
    <property type="project" value="GO_Central"/>
</dbReference>
<dbReference type="CDD" id="cd13536">
    <property type="entry name" value="PBP2_EcModA"/>
    <property type="match status" value="1"/>
</dbReference>
<dbReference type="FunFam" id="3.40.190.10:FF:000035">
    <property type="entry name" value="Molybdate ABC transporter substrate-binding protein"/>
    <property type="match status" value="1"/>
</dbReference>
<dbReference type="Gene3D" id="3.40.190.10">
    <property type="entry name" value="Periplasmic binding protein-like II"/>
    <property type="match status" value="2"/>
</dbReference>
<dbReference type="InterPro" id="IPR005950">
    <property type="entry name" value="ModA"/>
</dbReference>
<dbReference type="InterPro" id="IPR050682">
    <property type="entry name" value="ModA/WtpA"/>
</dbReference>
<dbReference type="NCBIfam" id="TIGR01256">
    <property type="entry name" value="modA"/>
    <property type="match status" value="1"/>
</dbReference>
<dbReference type="NCBIfam" id="NF007958">
    <property type="entry name" value="PRK10677.1"/>
    <property type="match status" value="1"/>
</dbReference>
<dbReference type="PANTHER" id="PTHR30632">
    <property type="entry name" value="MOLYBDATE-BINDING PERIPLASMIC PROTEIN"/>
    <property type="match status" value="1"/>
</dbReference>
<dbReference type="PANTHER" id="PTHR30632:SF17">
    <property type="entry name" value="MOLYBDATE-BINDING PROTEIN MODA"/>
    <property type="match status" value="1"/>
</dbReference>
<dbReference type="Pfam" id="PF13531">
    <property type="entry name" value="SBP_bac_11"/>
    <property type="match status" value="1"/>
</dbReference>
<dbReference type="PIRSF" id="PIRSF004846">
    <property type="entry name" value="ModA"/>
    <property type="match status" value="1"/>
</dbReference>
<dbReference type="SUPFAM" id="SSF53850">
    <property type="entry name" value="Periplasmic binding protein-like II"/>
    <property type="match status" value="1"/>
</dbReference>
<accession>P45323</accession>
<feature type="signal peptide" evidence="3">
    <location>
        <begin position="1"/>
        <end position="24"/>
    </location>
</feature>
<feature type="chain" id="PRO_0000031828" description="Molybdate-binding protein ModA">
    <location>
        <begin position="25"/>
        <end position="254"/>
    </location>
</feature>
<feature type="binding site" evidence="2">
    <location>
        <position position="33"/>
    </location>
    <ligand>
        <name>molybdate</name>
        <dbReference type="ChEBI" id="CHEBI:36264"/>
    </ligand>
</feature>
<feature type="binding site" evidence="2">
    <location>
        <position position="61"/>
    </location>
    <ligand>
        <name>molybdate</name>
        <dbReference type="ChEBI" id="CHEBI:36264"/>
    </ligand>
</feature>
<feature type="binding site" evidence="2">
    <location>
        <position position="146"/>
    </location>
    <ligand>
        <name>molybdate</name>
        <dbReference type="ChEBI" id="CHEBI:36264"/>
    </ligand>
</feature>
<feature type="binding site" evidence="2">
    <location>
        <position position="173"/>
    </location>
    <ligand>
        <name>molybdate</name>
        <dbReference type="ChEBI" id="CHEBI:36264"/>
    </ligand>
</feature>
<feature type="binding site" evidence="2">
    <location>
        <position position="191"/>
    </location>
    <ligand>
        <name>molybdate</name>
        <dbReference type="ChEBI" id="CHEBI:36264"/>
    </ligand>
</feature>
<feature type="sequence conflict" description="In Ref. 2; AAA24985." evidence="4" ref="2">
    <original>E</original>
    <variation>A</variation>
    <location>
        <position position="151"/>
    </location>
</feature>
<feature type="sequence conflict" description="In Ref. 2; AAA24985." evidence="4" ref="2">
    <original>K</original>
    <variation>Q</variation>
    <location>
        <position position="164"/>
    </location>
</feature>
<feature type="sequence conflict" description="In Ref. 2; AAA24985." evidence="4" ref="2">
    <original>G</original>
    <variation>A</variation>
    <location>
        <position position="170"/>
    </location>
</feature>
<sequence length="254" mass="27302">MKKLTKISTALLIAGLGFSFAASAKVTVFAAASMTDALQQVAKDYAKQNPKNEVVFSFASSSTLAKQVEEGAPADIFVSASNKWMKYLSEKDLTVKETEKVLVGNDLVLIAPAKSAVNSVDIAKGEWINALKDSYLSVGDPAHVPAGQYAEEALTKLNLWDKVKDRLARGKDVRGALALVERAEAPYGIVYSTDAKVSQQVKTVAVFPADSHKPVVYPVSIVKGHDNADSRDFLKYLESDAAKKVLVGYGFSAK</sequence>
<comment type="function">
    <text evidence="1">Involved in the transport of molybdenum into the cell.</text>
</comment>
<comment type="subunit">
    <text evidence="4">The complex is composed of two ATP-binding proteins (ModC), two transmembrane proteins (ModB) and a solute-binding protein (ModA).</text>
</comment>
<comment type="subcellular location">
    <subcellularLocation>
        <location evidence="4">Periplasm</location>
    </subcellularLocation>
</comment>
<comment type="similarity">
    <text evidence="4">Belongs to the bacterial solute-binding protein ModA family.</text>
</comment>
<keyword id="KW-0903">Direct protein sequencing</keyword>
<keyword id="KW-0479">Metal-binding</keyword>
<keyword id="KW-0500">Molybdenum</keyword>
<keyword id="KW-0574">Periplasm</keyword>
<keyword id="KW-1185">Reference proteome</keyword>
<keyword id="KW-0732">Signal</keyword>
<keyword id="KW-0813">Transport</keyword>
<keyword id="KW-0826">Tungsten</keyword>
<proteinExistence type="evidence at protein level"/>
<reference key="1">
    <citation type="journal article" date="1995" name="Science">
        <title>Whole-genome random sequencing and assembly of Haemophilus influenzae Rd.</title>
        <authorList>
            <person name="Fleischmann R.D."/>
            <person name="Adams M.D."/>
            <person name="White O."/>
            <person name="Clayton R.A."/>
            <person name="Kirkness E.F."/>
            <person name="Kerlavage A.R."/>
            <person name="Bult C.J."/>
            <person name="Tomb J.-F."/>
            <person name="Dougherty B.A."/>
            <person name="Merrick J.M."/>
            <person name="McKenney K."/>
            <person name="Sutton G.G."/>
            <person name="FitzHugh W."/>
            <person name="Fields C.A."/>
            <person name="Gocayne J.D."/>
            <person name="Scott J.D."/>
            <person name="Shirley R."/>
            <person name="Liu L.-I."/>
            <person name="Glodek A."/>
            <person name="Kelley J.M."/>
            <person name="Weidman J.F."/>
            <person name="Phillips C.A."/>
            <person name="Spriggs T."/>
            <person name="Hedblom E."/>
            <person name="Cotton M.D."/>
            <person name="Utterback T.R."/>
            <person name="Hanna M.C."/>
            <person name="Nguyen D.T."/>
            <person name="Saudek D.M."/>
            <person name="Brandon R.C."/>
            <person name="Fine L.D."/>
            <person name="Fritchman J.L."/>
            <person name="Fuhrmann J.L."/>
            <person name="Geoghagen N.S.M."/>
            <person name="Gnehm C.L."/>
            <person name="McDonald L.A."/>
            <person name="Small K.V."/>
            <person name="Fraser C.M."/>
            <person name="Smith H.O."/>
            <person name="Venter J.C."/>
        </authorList>
    </citation>
    <scope>NUCLEOTIDE SEQUENCE [LARGE SCALE GENOMIC DNA]</scope>
    <source>
        <strain>ATCC 51907 / DSM 11121 / KW20 / Rd</strain>
    </source>
</reference>
<reference key="2">
    <citation type="submission" date="1992-06" db="EMBL/GenBank/DDBJ databases">
        <title>Characterization and sequence of the lsg locus from Haemophilus influenzae.</title>
        <authorList>
            <person name="McLaughlin R."/>
            <person name="Abu Kwaik Y."/>
            <person name="Young R."/>
            <person name="Spinola S."/>
            <person name="Apicella M."/>
        </authorList>
    </citation>
    <scope>NUCLEOTIDE SEQUENCE [GENOMIC DNA] OF 1-209</scope>
    <source>
        <strain>A2</strain>
    </source>
</reference>
<reference key="3">
    <citation type="journal article" date="2000" name="Electrophoresis">
        <title>Two-dimensional map of the proteome of Haemophilus influenzae.</title>
        <authorList>
            <person name="Langen H."/>
            <person name="Takacs B."/>
            <person name="Evers S."/>
            <person name="Berndt P."/>
            <person name="Lahm H.W."/>
            <person name="Wipf B."/>
            <person name="Gray C."/>
            <person name="Fountoulakis M."/>
        </authorList>
    </citation>
    <scope>PROTEIN SEQUENCE OF 25-29</scope>
    <source>
        <strain>ATCC 51907 / DSM 11121 / KW20 / Rd</strain>
    </source>
</reference>